<feature type="chain" id="PRO_1000100761" description="Probable nicotinate-nucleotide adenylyltransferase">
    <location>
        <begin position="1"/>
        <end position="189"/>
    </location>
</feature>
<reference key="1">
    <citation type="journal article" date="2008" name="Chem. Biol. Interact.">
        <title>Extending the Bacillus cereus group genomics to putative food-borne pathogens of different toxicity.</title>
        <authorList>
            <person name="Lapidus A."/>
            <person name="Goltsman E."/>
            <person name="Auger S."/>
            <person name="Galleron N."/>
            <person name="Segurens B."/>
            <person name="Dossat C."/>
            <person name="Land M.L."/>
            <person name="Broussolle V."/>
            <person name="Brillard J."/>
            <person name="Guinebretiere M.-H."/>
            <person name="Sanchis V."/>
            <person name="Nguen-the C."/>
            <person name="Lereclus D."/>
            <person name="Richardson P."/>
            <person name="Wincker P."/>
            <person name="Weissenbach J."/>
            <person name="Ehrlich S.D."/>
            <person name="Sorokin A."/>
        </authorList>
    </citation>
    <scope>NUCLEOTIDE SEQUENCE [LARGE SCALE GENOMIC DNA]</scope>
    <source>
        <strain>KBAB4</strain>
    </source>
</reference>
<dbReference type="EC" id="2.7.7.18" evidence="1"/>
<dbReference type="EMBL" id="CP000903">
    <property type="protein sequence ID" value="ABY45344.1"/>
    <property type="molecule type" value="Genomic_DNA"/>
</dbReference>
<dbReference type="RefSeq" id="WP_002015218.1">
    <property type="nucleotide sequence ID" value="NC_010184.1"/>
</dbReference>
<dbReference type="SMR" id="A9VHV9"/>
<dbReference type="KEGG" id="bwe:BcerKBAB4_4183"/>
<dbReference type="eggNOG" id="COG1057">
    <property type="taxonomic scope" value="Bacteria"/>
</dbReference>
<dbReference type="HOGENOM" id="CLU_069765_3_1_9"/>
<dbReference type="UniPathway" id="UPA00253">
    <property type="reaction ID" value="UER00332"/>
</dbReference>
<dbReference type="Proteomes" id="UP000002154">
    <property type="component" value="Chromosome"/>
</dbReference>
<dbReference type="GO" id="GO:0005524">
    <property type="term" value="F:ATP binding"/>
    <property type="evidence" value="ECO:0007669"/>
    <property type="project" value="UniProtKB-KW"/>
</dbReference>
<dbReference type="GO" id="GO:0004515">
    <property type="term" value="F:nicotinate-nucleotide adenylyltransferase activity"/>
    <property type="evidence" value="ECO:0007669"/>
    <property type="project" value="UniProtKB-UniRule"/>
</dbReference>
<dbReference type="GO" id="GO:0009435">
    <property type="term" value="P:NAD biosynthetic process"/>
    <property type="evidence" value="ECO:0007669"/>
    <property type="project" value="UniProtKB-UniRule"/>
</dbReference>
<dbReference type="CDD" id="cd02165">
    <property type="entry name" value="NMNAT"/>
    <property type="match status" value="1"/>
</dbReference>
<dbReference type="FunFam" id="3.40.50.620:FF:000079">
    <property type="entry name" value="Probable nicotinate-nucleotide adenylyltransferase"/>
    <property type="match status" value="1"/>
</dbReference>
<dbReference type="Gene3D" id="3.40.50.620">
    <property type="entry name" value="HUPs"/>
    <property type="match status" value="1"/>
</dbReference>
<dbReference type="HAMAP" id="MF_00244">
    <property type="entry name" value="NaMN_adenylyltr"/>
    <property type="match status" value="1"/>
</dbReference>
<dbReference type="InterPro" id="IPR004821">
    <property type="entry name" value="Cyt_trans-like"/>
</dbReference>
<dbReference type="InterPro" id="IPR005248">
    <property type="entry name" value="NadD/NMNAT"/>
</dbReference>
<dbReference type="InterPro" id="IPR014729">
    <property type="entry name" value="Rossmann-like_a/b/a_fold"/>
</dbReference>
<dbReference type="NCBIfam" id="TIGR00125">
    <property type="entry name" value="cyt_tran_rel"/>
    <property type="match status" value="1"/>
</dbReference>
<dbReference type="NCBIfam" id="TIGR00482">
    <property type="entry name" value="nicotinate (nicotinamide) nucleotide adenylyltransferase"/>
    <property type="match status" value="1"/>
</dbReference>
<dbReference type="NCBIfam" id="NF000840">
    <property type="entry name" value="PRK00071.1-3"/>
    <property type="match status" value="1"/>
</dbReference>
<dbReference type="NCBIfam" id="NF000841">
    <property type="entry name" value="PRK00071.1-4"/>
    <property type="match status" value="1"/>
</dbReference>
<dbReference type="PANTHER" id="PTHR39321">
    <property type="entry name" value="NICOTINATE-NUCLEOTIDE ADENYLYLTRANSFERASE-RELATED"/>
    <property type="match status" value="1"/>
</dbReference>
<dbReference type="PANTHER" id="PTHR39321:SF3">
    <property type="entry name" value="PHOSPHOPANTETHEINE ADENYLYLTRANSFERASE"/>
    <property type="match status" value="1"/>
</dbReference>
<dbReference type="Pfam" id="PF01467">
    <property type="entry name" value="CTP_transf_like"/>
    <property type="match status" value="1"/>
</dbReference>
<dbReference type="SUPFAM" id="SSF52374">
    <property type="entry name" value="Nucleotidylyl transferase"/>
    <property type="match status" value="1"/>
</dbReference>
<evidence type="ECO:0000255" key="1">
    <source>
        <dbReference type="HAMAP-Rule" id="MF_00244"/>
    </source>
</evidence>
<proteinExistence type="inferred from homology"/>
<gene>
    <name evidence="1" type="primary">nadD</name>
    <name type="ordered locus">BcerKBAB4_4183</name>
</gene>
<sequence>MRKIGIIGGTFDPPHNGHLLIANEVYHALGLEEVWFLPNQVPPHKQGRNITSVKSRLNMLQIAIEEEAYFSICLEELDREGPSYTYDTMVQLTEKYPDVQFHFIIGGDMVEYLPKWYNIEKLLKLVTFVGVARPGYTLHTPYDIVKVEIPEFAVSSSLLRERYMTKKTCKYLLPEKVQVYIERNGLYES</sequence>
<organism>
    <name type="scientific">Bacillus mycoides (strain KBAB4)</name>
    <name type="common">Bacillus weihenstephanensis</name>
    <dbReference type="NCBI Taxonomy" id="315730"/>
    <lineage>
        <taxon>Bacteria</taxon>
        <taxon>Bacillati</taxon>
        <taxon>Bacillota</taxon>
        <taxon>Bacilli</taxon>
        <taxon>Bacillales</taxon>
        <taxon>Bacillaceae</taxon>
        <taxon>Bacillus</taxon>
        <taxon>Bacillus cereus group</taxon>
    </lineage>
</organism>
<accession>A9VHV9</accession>
<comment type="function">
    <text evidence="1">Catalyzes the reversible adenylation of nicotinate mononucleotide (NaMN) to nicotinic acid adenine dinucleotide (NaAD).</text>
</comment>
<comment type="catalytic activity">
    <reaction evidence="1">
        <text>nicotinate beta-D-ribonucleotide + ATP + H(+) = deamido-NAD(+) + diphosphate</text>
        <dbReference type="Rhea" id="RHEA:22860"/>
        <dbReference type="ChEBI" id="CHEBI:15378"/>
        <dbReference type="ChEBI" id="CHEBI:30616"/>
        <dbReference type="ChEBI" id="CHEBI:33019"/>
        <dbReference type="ChEBI" id="CHEBI:57502"/>
        <dbReference type="ChEBI" id="CHEBI:58437"/>
        <dbReference type="EC" id="2.7.7.18"/>
    </reaction>
</comment>
<comment type="pathway">
    <text evidence="1">Cofactor biosynthesis; NAD(+) biosynthesis; deamido-NAD(+) from nicotinate D-ribonucleotide: step 1/1.</text>
</comment>
<comment type="similarity">
    <text evidence="1">Belongs to the NadD family.</text>
</comment>
<protein>
    <recommendedName>
        <fullName evidence="1">Probable nicotinate-nucleotide adenylyltransferase</fullName>
        <ecNumber evidence="1">2.7.7.18</ecNumber>
    </recommendedName>
    <alternativeName>
        <fullName evidence="1">Deamido-NAD(+) diphosphorylase</fullName>
    </alternativeName>
    <alternativeName>
        <fullName evidence="1">Deamido-NAD(+) pyrophosphorylase</fullName>
    </alternativeName>
    <alternativeName>
        <fullName evidence="1">Nicotinate mononucleotide adenylyltransferase</fullName>
        <shortName evidence="1">NaMN adenylyltransferase</shortName>
    </alternativeName>
</protein>
<name>NADD_BACMK</name>
<keyword id="KW-0067">ATP-binding</keyword>
<keyword id="KW-0520">NAD</keyword>
<keyword id="KW-0547">Nucleotide-binding</keyword>
<keyword id="KW-0548">Nucleotidyltransferase</keyword>
<keyword id="KW-0662">Pyridine nucleotide biosynthesis</keyword>
<keyword id="KW-0808">Transferase</keyword>